<keyword id="KW-0106">Calcium</keyword>
<keyword id="KW-0107">Calcium channel</keyword>
<keyword id="KW-0109">Calcium transport</keyword>
<keyword id="KW-1015">Disulfide bond</keyword>
<keyword id="KW-0325">Glycoprotein</keyword>
<keyword id="KW-0407">Ion channel</keyword>
<keyword id="KW-0406">Ion transport</keyword>
<keyword id="KW-0472">Membrane</keyword>
<keyword id="KW-0479">Metal-binding</keyword>
<keyword id="KW-0597">Phosphoprotein</keyword>
<keyword id="KW-1185">Reference proteome</keyword>
<keyword id="KW-0732">Signal</keyword>
<keyword id="KW-0812">Transmembrane</keyword>
<keyword id="KW-1133">Transmembrane helix</keyword>
<keyword id="KW-0813">Transport</keyword>
<keyword id="KW-0851">Voltage-gated channel</keyword>
<reference key="1">
    <citation type="journal article" date="1999" name="J. Neurosci.">
        <title>Molecular diversity of the calcium channel alpha2delta subunit.</title>
        <authorList>
            <person name="Klugbauer N."/>
            <person name="Lacinova L."/>
            <person name="Marais E."/>
            <person name="Hobom M."/>
            <person name="Hofmann F."/>
        </authorList>
    </citation>
    <scope>NUCLEOTIDE SEQUENCE [MRNA]</scope>
    <scope>FUNCTION</scope>
    <scope>TISSUE SPECIFICITY</scope>
    <source>
        <tissue>Brain</tissue>
    </source>
</reference>
<reference key="2">
    <citation type="journal article" date="1999" name="J. Physiol. (Lond.)">
        <title>Absence of modulation of the expressed calcium channel alpha1G subunit by alpha2delta subunits.</title>
        <authorList>
            <person name="Lacinova L."/>
            <person name="Klugbauer N."/>
            <person name="Hofmann F."/>
        </authorList>
    </citation>
    <scope>FUNCTION</scope>
</reference>
<reference key="3">
    <citation type="journal article" date="2001" name="J. Membr. Biol.">
        <title>Tissue-specific expression and gabapentin-binding properties of calcium channel alpha2delta subunit subtypes.</title>
        <authorList>
            <person name="Gong H.C."/>
            <person name="Hang J."/>
            <person name="Kohler W."/>
            <person name="Li L."/>
            <person name="Su T.-Z."/>
        </authorList>
    </citation>
    <scope>TISSUE SPECIFICITY</scope>
</reference>
<reference key="4">
    <citation type="journal article" date="2001" name="Mol. Pharmacol.">
        <title>Calcium channel alpha(2)delta subunits-structure and Gabapentin binding.</title>
        <authorList>
            <person name="Marais E."/>
            <person name="Klugbauer N."/>
            <person name="Hofmann F."/>
        </authorList>
    </citation>
    <scope>DISULFIDE BONDS</scope>
    <scope>GLYCOSYLATION</scope>
    <scope>PROTEOLYTIC PROCESSING</scope>
    <scope>LACK OF GABAPENTIN-BINDING</scope>
</reference>
<reference key="5">
    <citation type="journal article" date="2010" name="Cell">
        <title>A tissue-specific atlas of mouse protein phosphorylation and expression.</title>
        <authorList>
            <person name="Huttlin E.L."/>
            <person name="Jedrychowski M.P."/>
            <person name="Elias J.E."/>
            <person name="Goswami T."/>
            <person name="Rad R."/>
            <person name="Beausoleil S.A."/>
            <person name="Villen J."/>
            <person name="Haas W."/>
            <person name="Sowa M.E."/>
            <person name="Gygi S.P."/>
        </authorList>
    </citation>
    <scope>IDENTIFICATION BY MASS SPECTROMETRY [LARGE SCALE ANALYSIS]</scope>
    <source>
        <tissue>Brain</tissue>
    </source>
</reference>
<accession>Q9Z1L5</accession>
<feature type="signal peptide" evidence="3">
    <location>
        <begin position="1"/>
        <end position="33"/>
    </location>
</feature>
<feature type="chain" id="PRO_0000304649" description="Voltage-dependent calcium channel subunit alpha-2/delta-3">
    <location>
        <begin position="34"/>
        <end position="1091"/>
    </location>
</feature>
<feature type="chain" id="PRO_0000304650" description="Voltage-dependent calcium channel subunit alpha-2-3" evidence="3">
    <location>
        <begin position="34"/>
        <end status="unknown"/>
    </location>
</feature>
<feature type="chain" id="PRO_0000304651" description="Voltage-dependent calcium channel subunit delta-3" evidence="3">
    <location>
        <begin status="unknown"/>
        <end position="1091"/>
    </location>
</feature>
<feature type="topological domain" description="Extracellular" evidence="3">
    <location>
        <begin position="34"/>
        <end position="1068"/>
    </location>
</feature>
<feature type="transmembrane region" description="Helical" evidence="3">
    <location>
        <begin position="1069"/>
        <end position="1089"/>
    </location>
</feature>
<feature type="topological domain" description="Cytoplasmic" evidence="3">
    <location>
        <begin position="1090"/>
        <end position="1091"/>
    </location>
</feature>
<feature type="domain" description="VWFA" evidence="4">
    <location>
        <begin position="256"/>
        <end position="438"/>
    </location>
</feature>
<feature type="domain" description="Cache">
    <location>
        <begin position="452"/>
        <end position="549"/>
    </location>
</feature>
<feature type="short sequence motif" description="MIDAS-like motif">
    <location>
        <begin position="262"/>
        <end position="266"/>
    </location>
</feature>
<feature type="binding site" evidence="1">
    <location>
        <position position="262"/>
    </location>
    <ligand>
        <name>a divalent metal cation</name>
        <dbReference type="ChEBI" id="CHEBI:60240"/>
    </ligand>
</feature>
<feature type="binding site" evidence="1">
    <location>
        <position position="264"/>
    </location>
    <ligand>
        <name>a divalent metal cation</name>
        <dbReference type="ChEBI" id="CHEBI:60240"/>
    </ligand>
</feature>
<feature type="binding site" evidence="1">
    <location>
        <position position="266"/>
    </location>
    <ligand>
        <name>a divalent metal cation</name>
        <dbReference type="ChEBI" id="CHEBI:60240"/>
    </ligand>
</feature>
<feature type="modified residue" description="Phosphotyrosine" evidence="2">
    <location>
        <position position="924"/>
    </location>
</feature>
<feature type="glycosylation site" description="N-linked (GlcNAc...) asparagine" evidence="3">
    <location>
        <position position="166"/>
    </location>
</feature>
<feature type="glycosylation site" description="N-linked (GlcNAc...) asparagine" evidence="3">
    <location>
        <position position="309"/>
    </location>
</feature>
<feature type="glycosylation site" description="N-linked (GlcNAc...) asparagine" evidence="3">
    <location>
        <position position="553"/>
    </location>
</feature>
<feature type="glycosylation site" description="N-linked (GlcNAc...) asparagine" evidence="3">
    <location>
        <position position="632"/>
    </location>
</feature>
<feature type="disulfide bond" description="Interchain (between alpha-2-3 and delta-3 chains)" evidence="1">
    <location>
        <begin position="412"/>
        <end position="1055"/>
    </location>
</feature>
<organism>
    <name type="scientific">Mus musculus</name>
    <name type="common">Mouse</name>
    <dbReference type="NCBI Taxonomy" id="10090"/>
    <lineage>
        <taxon>Eukaryota</taxon>
        <taxon>Metazoa</taxon>
        <taxon>Chordata</taxon>
        <taxon>Craniata</taxon>
        <taxon>Vertebrata</taxon>
        <taxon>Euteleostomi</taxon>
        <taxon>Mammalia</taxon>
        <taxon>Eutheria</taxon>
        <taxon>Euarchontoglires</taxon>
        <taxon>Glires</taxon>
        <taxon>Rodentia</taxon>
        <taxon>Myomorpha</taxon>
        <taxon>Muroidea</taxon>
        <taxon>Muridae</taxon>
        <taxon>Murinae</taxon>
        <taxon>Mus</taxon>
        <taxon>Mus</taxon>
    </lineage>
</organism>
<dbReference type="EMBL" id="AJ010949">
    <property type="protein sequence ID" value="CAA09423.1"/>
    <property type="molecule type" value="mRNA"/>
</dbReference>
<dbReference type="PIR" id="T30256">
    <property type="entry name" value="T30256"/>
</dbReference>
<dbReference type="RefSeq" id="NP_033915.1">
    <property type="nucleotide sequence ID" value="NM_009785.1"/>
</dbReference>
<dbReference type="SMR" id="Q9Z1L5"/>
<dbReference type="BioGRID" id="198438">
    <property type="interactions" value="1"/>
</dbReference>
<dbReference type="FunCoup" id="Q9Z1L5">
    <property type="interactions" value="477"/>
</dbReference>
<dbReference type="IntAct" id="Q9Z1L5">
    <property type="interactions" value="2"/>
</dbReference>
<dbReference type="MINT" id="Q9Z1L5"/>
<dbReference type="STRING" id="10090.ENSMUSP00000022567"/>
<dbReference type="GlyConnect" id="2822">
    <property type="glycosylation" value="3 N-Linked glycans (2 sites)"/>
</dbReference>
<dbReference type="GlyCosmos" id="Q9Z1L5">
    <property type="glycosylation" value="4 sites, 3 glycans"/>
</dbReference>
<dbReference type="GlyGen" id="Q9Z1L5">
    <property type="glycosylation" value="7 sites, 5 N-linked glycans (4 sites), 1 O-linked glycan (1 site)"/>
</dbReference>
<dbReference type="iPTMnet" id="Q9Z1L5"/>
<dbReference type="PhosphoSitePlus" id="Q9Z1L5"/>
<dbReference type="SwissPalm" id="Q9Z1L5"/>
<dbReference type="PaxDb" id="10090-ENSMUSP00000022567"/>
<dbReference type="PeptideAtlas" id="Q9Z1L5"/>
<dbReference type="ProteomicsDB" id="273813"/>
<dbReference type="Antibodypedia" id="31444">
    <property type="antibodies" value="124 antibodies from 23 providers"/>
</dbReference>
<dbReference type="DNASU" id="12294"/>
<dbReference type="Ensembl" id="ENSMUST00000022567.9">
    <property type="protein sequence ID" value="ENSMUSP00000022567.8"/>
    <property type="gene ID" value="ENSMUSG00000021991.10"/>
</dbReference>
<dbReference type="GeneID" id="12294"/>
<dbReference type="KEGG" id="mmu:12294"/>
<dbReference type="UCSC" id="uc007sui.1">
    <property type="organism name" value="mouse"/>
</dbReference>
<dbReference type="AGR" id="MGI:1338890"/>
<dbReference type="CTD" id="55799"/>
<dbReference type="MGI" id="MGI:1338890">
    <property type="gene designation" value="Cacna2d3"/>
</dbReference>
<dbReference type="VEuPathDB" id="HostDB:ENSMUSG00000021991"/>
<dbReference type="eggNOG" id="KOG2353">
    <property type="taxonomic scope" value="Eukaryota"/>
</dbReference>
<dbReference type="GeneTree" id="ENSGT00940000155766"/>
<dbReference type="HOGENOM" id="CLU_004660_1_1_1"/>
<dbReference type="InParanoid" id="Q9Z1L5"/>
<dbReference type="OMA" id="KEPLLQX"/>
<dbReference type="OrthoDB" id="10054666at2759"/>
<dbReference type="PhylomeDB" id="Q9Z1L5"/>
<dbReference type="TreeFam" id="TF315824"/>
<dbReference type="Reactome" id="R-MMU-112308">
    <property type="pathway name" value="Presynaptic depolarization and calcium channel opening"/>
</dbReference>
<dbReference type="BioGRID-ORCS" id="12294">
    <property type="hits" value="1 hit in 72 CRISPR screens"/>
</dbReference>
<dbReference type="CD-CODE" id="CE726F99">
    <property type="entry name" value="Postsynaptic density"/>
</dbReference>
<dbReference type="ChiTaRS" id="Cacna2d3">
    <property type="organism name" value="mouse"/>
</dbReference>
<dbReference type="PRO" id="PR:Q9Z1L5"/>
<dbReference type="Proteomes" id="UP000000589">
    <property type="component" value="Chromosome 14"/>
</dbReference>
<dbReference type="RNAct" id="Q9Z1L5">
    <property type="molecule type" value="protein"/>
</dbReference>
<dbReference type="Bgee" id="ENSMUSG00000021991">
    <property type="expression patterns" value="Expressed in caudate-putamen and 150 other cell types or tissues"/>
</dbReference>
<dbReference type="ExpressionAtlas" id="Q9Z1L5">
    <property type="expression patterns" value="baseline and differential"/>
</dbReference>
<dbReference type="GO" id="GO:0098982">
    <property type="term" value="C:GABA-ergic synapse"/>
    <property type="evidence" value="ECO:0000314"/>
    <property type="project" value="SynGO"/>
</dbReference>
<dbReference type="GO" id="GO:0034702">
    <property type="term" value="C:monoatomic ion channel complex"/>
    <property type="evidence" value="ECO:0007669"/>
    <property type="project" value="UniProtKB-KW"/>
</dbReference>
<dbReference type="GO" id="GO:0048787">
    <property type="term" value="C:presynaptic active zone membrane"/>
    <property type="evidence" value="ECO:0000314"/>
    <property type="project" value="SynGO"/>
</dbReference>
<dbReference type="GO" id="GO:0046872">
    <property type="term" value="F:metal ion binding"/>
    <property type="evidence" value="ECO:0007669"/>
    <property type="project" value="UniProtKB-KW"/>
</dbReference>
<dbReference type="GO" id="GO:0005245">
    <property type="term" value="F:voltage-gated calcium channel activity"/>
    <property type="evidence" value="ECO:0007669"/>
    <property type="project" value="Ensembl"/>
</dbReference>
<dbReference type="GO" id="GO:1990314">
    <property type="term" value="P:cellular response to insulin-like growth factor stimulus"/>
    <property type="evidence" value="ECO:0007669"/>
    <property type="project" value="Ensembl"/>
</dbReference>
<dbReference type="GO" id="GO:0099174">
    <property type="term" value="P:regulation of presynapse organization"/>
    <property type="evidence" value="ECO:0000314"/>
    <property type="project" value="SynGO"/>
</dbReference>
<dbReference type="CDD" id="cd12912">
    <property type="entry name" value="PDC2_MCP_like"/>
    <property type="match status" value="1"/>
</dbReference>
<dbReference type="CDD" id="cd01463">
    <property type="entry name" value="vWA_VGCC_like"/>
    <property type="match status" value="1"/>
</dbReference>
<dbReference type="FunFam" id="3.30.450.20:FF:000012">
    <property type="entry name" value="Calcium channel, voltage-dependent, alpha2/delta subunit 3"/>
    <property type="match status" value="1"/>
</dbReference>
<dbReference type="FunFam" id="3.40.50.410:FF:000007">
    <property type="entry name" value="Calcium voltage-gated channel auxiliary subunit alpha2delta 3"/>
    <property type="match status" value="1"/>
</dbReference>
<dbReference type="Gene3D" id="3.30.450.20">
    <property type="entry name" value="PAS domain"/>
    <property type="match status" value="1"/>
</dbReference>
<dbReference type="Gene3D" id="3.40.50.410">
    <property type="entry name" value="von Willebrand factor, type A domain"/>
    <property type="match status" value="1"/>
</dbReference>
<dbReference type="InterPro" id="IPR051173">
    <property type="entry name" value="Ca_channel_alpha-2/delta"/>
</dbReference>
<dbReference type="InterPro" id="IPR013680">
    <property type="entry name" value="VDCC_a2/dsu"/>
</dbReference>
<dbReference type="InterPro" id="IPR013608">
    <property type="entry name" value="VWA_N"/>
</dbReference>
<dbReference type="InterPro" id="IPR002035">
    <property type="entry name" value="VWF_A"/>
</dbReference>
<dbReference type="InterPro" id="IPR036465">
    <property type="entry name" value="vWFA_dom_sf"/>
</dbReference>
<dbReference type="PANTHER" id="PTHR10166">
    <property type="entry name" value="VOLTAGE-DEPENDENT CALCIUM CHANNEL SUBUNIT ALPHA-2/DELTA-RELATED"/>
    <property type="match status" value="1"/>
</dbReference>
<dbReference type="PANTHER" id="PTHR10166:SF25">
    <property type="entry name" value="VOLTAGE-DEPENDENT CALCIUM CHANNEL SUBUNIT ALPHA-2_DELTA-3"/>
    <property type="match status" value="1"/>
</dbReference>
<dbReference type="Pfam" id="PF08473">
    <property type="entry name" value="VGCC_alpha2"/>
    <property type="match status" value="1"/>
</dbReference>
<dbReference type="Pfam" id="PF13768">
    <property type="entry name" value="VWA_3"/>
    <property type="match status" value="1"/>
</dbReference>
<dbReference type="Pfam" id="PF08399">
    <property type="entry name" value="VWA_N"/>
    <property type="match status" value="1"/>
</dbReference>
<dbReference type="SMART" id="SM00327">
    <property type="entry name" value="VWA"/>
    <property type="match status" value="1"/>
</dbReference>
<dbReference type="SUPFAM" id="SSF53300">
    <property type="entry name" value="vWA-like"/>
    <property type="match status" value="1"/>
</dbReference>
<dbReference type="PROSITE" id="PS50234">
    <property type="entry name" value="VWFA"/>
    <property type="match status" value="1"/>
</dbReference>
<name>CA2D3_MOUSE</name>
<proteinExistence type="evidence at protein level"/>
<evidence type="ECO:0000250" key="1"/>
<evidence type="ECO:0000250" key="2">
    <source>
        <dbReference type="UniProtKB" id="Q8CFG5"/>
    </source>
</evidence>
<evidence type="ECO:0000255" key="3"/>
<evidence type="ECO:0000255" key="4">
    <source>
        <dbReference type="PROSITE-ProRule" id="PRU00219"/>
    </source>
</evidence>
<evidence type="ECO:0000269" key="5">
    <source>
    </source>
</evidence>
<evidence type="ECO:0000269" key="6">
    <source>
    </source>
</evidence>
<evidence type="ECO:0000269" key="7">
    <source>
    </source>
</evidence>
<evidence type="ECO:0000269" key="8">
    <source>
    </source>
</evidence>
<evidence type="ECO:0000305" key="9"/>
<comment type="function">
    <text evidence="5 8">The alpha-2/delta subunit of voltage-dependent calcium channels regulates calcium current density and activation/inactivation kinetics of the calcium channel. Acts as a regulatory subunit for P/Q-type calcium channel (CACNA1A), N-type (CACNA1B), L-type (CACNA1C OR CACNA1D) but not T-type (CACNA1G).</text>
</comment>
<comment type="subunit">
    <text evidence="1">Dimer formed of alpha-2-2 and delta-2 chains; disulfide-linked. Voltage-dependent calcium channels are multisubunit complexes, consisting of alpha-1 (CACNA1), alpha-2 (CACNA2D), beta (CACNB) and delta (CACNA2D) subunits in a 1:1:1:1 ratio (By similarity).</text>
</comment>
<comment type="subcellular location">
    <subcellularLocation>
        <location evidence="9">Membrane</location>
        <topology evidence="9">Single-pass type I membrane protein</topology>
    </subcellularLocation>
</comment>
<comment type="tissue specificity">
    <text evidence="7 8">Brain-specific. Predominantly expressed in the caudate putamen, entorhinal complex, hippocampus and cortex.</text>
</comment>
<comment type="domain">
    <text evidence="1">The MIDAS-like motif in the VWFA domain binds divalent metal cations and is required to promote trafficking of the alpha-1 (CACNA1) subunit to the plasma membrane by an integrin-like switch.</text>
</comment>
<comment type="PTM">
    <text evidence="6">N-glycosylated.</text>
</comment>
<comment type="PTM">
    <text evidence="6">May be proteolytically processed into subunits alpha-2-3 and delta-3 that are disulfide-linked. It is however unclear whether such cleavage really takes place in vivo and has a functional role.</text>
</comment>
<comment type="miscellaneous">
    <text>In contrast to CACNA2D1 and CACNA2D2, it does not bind gabapentin, an antiepileptic drug.</text>
</comment>
<comment type="similarity">
    <text evidence="9">Belongs to the calcium channel subunit alpha-2/delta family.</text>
</comment>
<gene>
    <name type="primary">Cacna2d3</name>
</gene>
<protein>
    <recommendedName>
        <fullName>Voltage-dependent calcium channel subunit alpha-2/delta-3</fullName>
    </recommendedName>
    <alternativeName>
        <fullName>Voltage-gated calcium channel subunit alpha-2/delta-3</fullName>
    </alternativeName>
    <component>
        <recommendedName>
            <fullName>Voltage-dependent calcium channel subunit alpha-2-3</fullName>
        </recommendedName>
    </component>
    <component>
        <recommendedName>
            <fullName>Voltage-dependent calcium channel subunit delta-3</fullName>
        </recommendedName>
    </component>
</protein>
<sequence length="1091" mass="122778">MAGPGSLCCASRGASALLATALLYAALGDVVRSEQQIPLSVVKLWASAFGGEIKSIAAKYSGSQLLQKKYKEYEKDVAIEEIDGLQLVKKLAKIMEEMFHKKSEAVRRLVEAAEEAHLKHEFDADLQYEYFNAVLINERDKDGNFLELGKEFILAPNDHFNNLPVNISLSDVQVPTNMYNKDPAIVNGVYWSESLNKVFVDNFDRDPSLIWQYFGSAKGFFRQYPGIKWEPDENGVIAFDCRNRKWYIQAATSPKDVVILVDVSGSMKGLRLTIAKQTVSSILDTLGDDDFFNIITYNEELHYVEPCLNGTLVQADRTNKEHFREHLDKLFAKGIGMLDIALNEAFNILSDFNHTGQGSICSQAIMLITDGAVDTYDTIFAKYNWPDRKVRIFTYLIGREAAFADNLKWMACANKGFFTQISTLADVQENVMEYLHVLSRPKVIDQEHDVVWTEAYIDSTLPQAQKLADDQGLVLMTTVAMPVFSKQNETRSKGILLGVVGTDVPVKELLKTIPKYKLGIHGYAFAITNNGYILTHPELRPLYEEGKKRRKPNYSSVDLSEVEWEDRDDVLRNAMVNRKTGKFSMEVKKTVDKGKRVLVMTNDYYYTDIKGTPFSLGVALSRGHGKYFFRGNVTIEEGLHDLEHPDVSLADEWSYCNTDLHPEHRHLSQLEAIKLYLKGKEPLLQCDKELIQEVLFDAVVSAPIEAYWTSLALNKSENSDKGVEVAFLGTRTGLSRINLFVGAEQLTNQDFLKAGDKENIFNADHFPLWYRRAAEQIAGSFVYSIPFSTGTVNKSNVVTASTSIQLLDERKSPVVAAVGIQMKLEFFQRKFWTASRQCASLDGKCSISCDDETVNCYLIDNNGFILVSEDYTQTGDFFGEVEGAVMNKLLTMGSFKRITLYDYQAMCRANKESSDSAHGLLDPYKAFLSAAKWIMTELVLFLVEFNLCSWWHSDMTAKAQKLKQTLEPCDTEYPAFVSERTIKETTGNIACEDCSKSFVIQQIPSSNLFMVVVDSSCLCESVAPITMAPIEIRYNESLKCERLKAQKIRRRPESCHGFHPEENARECGGASSLQAQAALLLLPLVSSLFSR</sequence>